<keyword id="KW-1185">Reference proteome</keyword>
<keyword id="KW-0732">Signal</keyword>
<organism>
    <name type="scientific">Pasteurella multocida (strain Pm70)</name>
    <dbReference type="NCBI Taxonomy" id="272843"/>
    <lineage>
        <taxon>Bacteria</taxon>
        <taxon>Pseudomonadati</taxon>
        <taxon>Pseudomonadota</taxon>
        <taxon>Gammaproteobacteria</taxon>
        <taxon>Pasteurellales</taxon>
        <taxon>Pasteurellaceae</taxon>
        <taxon>Pasteurella</taxon>
    </lineage>
</organism>
<protein>
    <recommendedName>
        <fullName>Uncharacterized protein PM0670</fullName>
    </recommendedName>
</protein>
<name>Y670_PASMU</name>
<reference key="1">
    <citation type="journal article" date="2001" name="Proc. Natl. Acad. Sci. U.S.A.">
        <title>Complete genomic sequence of Pasteurella multocida Pm70.</title>
        <authorList>
            <person name="May B.J."/>
            <person name="Zhang Q."/>
            <person name="Li L.L."/>
            <person name="Paustian M.L."/>
            <person name="Whittam T.S."/>
            <person name="Kapur V."/>
        </authorList>
    </citation>
    <scope>NUCLEOTIDE SEQUENCE [LARGE SCALE GENOMIC DNA]</scope>
    <source>
        <strain>Pm70</strain>
    </source>
</reference>
<comment type="similarity">
    <text evidence="2">Belongs to the cytochrome b562 family.</text>
</comment>
<accession>Q9CMY0</accession>
<sequence>MHKLLKLLSITLIGLSVATGVQANVRAEMNQMKTVAATLTNAKDVAEFQESAKILREIAQQSSEKRPSSITNDADFKGYQEGMKEFITALDEADKLAQEGNLDAAKTAAKKLFDIRNVYHKKYK</sequence>
<dbReference type="EMBL" id="AE004439">
    <property type="protein sequence ID" value="AAK02754.1"/>
    <property type="molecule type" value="Genomic_DNA"/>
</dbReference>
<dbReference type="RefSeq" id="WP_005726554.1">
    <property type="nucleotide sequence ID" value="NC_002663.1"/>
</dbReference>
<dbReference type="SMR" id="Q9CMY0"/>
<dbReference type="STRING" id="272843.PM0670"/>
<dbReference type="EnsemblBacteria" id="AAK02754">
    <property type="protein sequence ID" value="AAK02754"/>
    <property type="gene ID" value="PM0670"/>
</dbReference>
<dbReference type="KEGG" id="pmu:PM0670"/>
<dbReference type="PATRIC" id="fig|272843.6.peg.678"/>
<dbReference type="HOGENOM" id="CLU_161963_0_0_6"/>
<dbReference type="OrthoDB" id="5690282at2"/>
<dbReference type="Proteomes" id="UP000000809">
    <property type="component" value="Chromosome"/>
</dbReference>
<dbReference type="GO" id="GO:0042597">
    <property type="term" value="C:periplasmic space"/>
    <property type="evidence" value="ECO:0007669"/>
    <property type="project" value="InterPro"/>
</dbReference>
<dbReference type="GO" id="GO:0009055">
    <property type="term" value="F:electron transfer activity"/>
    <property type="evidence" value="ECO:0007669"/>
    <property type="project" value="InterPro"/>
</dbReference>
<dbReference type="GO" id="GO:0020037">
    <property type="term" value="F:heme binding"/>
    <property type="evidence" value="ECO:0007669"/>
    <property type="project" value="InterPro"/>
</dbReference>
<dbReference type="GO" id="GO:0005506">
    <property type="term" value="F:iron ion binding"/>
    <property type="evidence" value="ECO:0007669"/>
    <property type="project" value="InterPro"/>
</dbReference>
<dbReference type="GO" id="GO:0022900">
    <property type="term" value="P:electron transport chain"/>
    <property type="evidence" value="ECO:0007669"/>
    <property type="project" value="InterPro"/>
</dbReference>
<dbReference type="Gene3D" id="1.20.120.10">
    <property type="entry name" value="Cytochrome c/b562"/>
    <property type="match status" value="1"/>
</dbReference>
<dbReference type="InterPro" id="IPR009155">
    <property type="entry name" value="Cyt_b562"/>
</dbReference>
<dbReference type="InterPro" id="IPR010980">
    <property type="entry name" value="Cyt_c/b562"/>
</dbReference>
<dbReference type="Pfam" id="PF07361">
    <property type="entry name" value="Cytochrom_B562"/>
    <property type="match status" value="1"/>
</dbReference>
<dbReference type="PIRSF" id="PIRSF000029">
    <property type="entry name" value="Cytochrome_b562"/>
    <property type="match status" value="1"/>
</dbReference>
<dbReference type="SUPFAM" id="SSF47175">
    <property type="entry name" value="Cytochromes"/>
    <property type="match status" value="1"/>
</dbReference>
<proteinExistence type="inferred from homology"/>
<gene>
    <name type="ordered locus">PM0670</name>
</gene>
<feature type="signal peptide" evidence="1">
    <location>
        <begin position="1"/>
        <end position="23"/>
    </location>
</feature>
<feature type="chain" id="PRO_0000003645" description="Uncharacterized protein PM0670">
    <location>
        <begin position="24"/>
        <end position="124"/>
    </location>
</feature>
<evidence type="ECO:0000255" key="1"/>
<evidence type="ECO:0000305" key="2"/>